<accession>Q5UPG8</accession>
<keyword id="KW-1185">Reference proteome</keyword>
<organism>
    <name type="scientific">Acanthamoeba polyphaga mimivirus</name>
    <name type="common">APMV</name>
    <dbReference type="NCBI Taxonomy" id="212035"/>
    <lineage>
        <taxon>Viruses</taxon>
        <taxon>Varidnaviria</taxon>
        <taxon>Bamfordvirae</taxon>
        <taxon>Nucleocytoviricota</taxon>
        <taxon>Megaviricetes</taxon>
        <taxon>Imitervirales</taxon>
        <taxon>Mimiviridae</taxon>
        <taxon>Megamimivirinae</taxon>
        <taxon>Mimivirus</taxon>
        <taxon>Mimivirus bradfordmassiliense</taxon>
    </lineage>
</organism>
<sequence>MMIIDCGKYYGIDYKSSSLQKLIENSLTSQEICKCIDKINTIRAHKKVMNTIIKYVPKLFPRVVSHPYGLCMQIMKLKWDLSDCNDKQYTNEHCIKVMNYIGATDICHLQEKLNDINKFV</sequence>
<proteinExistence type="predicted"/>
<reference key="1">
    <citation type="journal article" date="2004" name="Science">
        <title>The 1.2-megabase genome sequence of Mimivirus.</title>
        <authorList>
            <person name="Raoult D."/>
            <person name="Audic S."/>
            <person name="Robert C."/>
            <person name="Abergel C."/>
            <person name="Renesto P."/>
            <person name="Ogata H."/>
            <person name="La Scola B."/>
            <person name="Susan M."/>
            <person name="Claverie J.-M."/>
        </authorList>
    </citation>
    <scope>NUCLEOTIDE SEQUENCE [LARGE SCALE GENOMIC DNA]</scope>
    <source>
        <strain>Rowbotham-Bradford</strain>
    </source>
</reference>
<feature type="chain" id="PRO_0000253222" description="Uncharacterized protein L90">
    <location>
        <begin position="1"/>
        <end position="120"/>
    </location>
</feature>
<organismHost>
    <name type="scientific">Acanthamoeba polyphaga</name>
    <name type="common">Amoeba</name>
    <dbReference type="NCBI Taxonomy" id="5757"/>
</organismHost>
<name>YL090_MIMIV</name>
<dbReference type="EMBL" id="AY653733">
    <property type="protein sequence ID" value="AAV50365.1"/>
    <property type="molecule type" value="Genomic_DNA"/>
</dbReference>
<dbReference type="SMR" id="Q5UPG8"/>
<dbReference type="Proteomes" id="UP000001134">
    <property type="component" value="Genome"/>
</dbReference>
<gene>
    <name type="ordered locus">MIMI_L90</name>
</gene>
<protein>
    <recommendedName>
        <fullName>Uncharacterized protein L90</fullName>
    </recommendedName>
</protein>